<organism>
    <name type="scientific">Mycobacterium tuberculosis (strain ATCC 25618 / H37Rv)</name>
    <dbReference type="NCBI Taxonomy" id="83332"/>
    <lineage>
        <taxon>Bacteria</taxon>
        <taxon>Bacillati</taxon>
        <taxon>Actinomycetota</taxon>
        <taxon>Actinomycetes</taxon>
        <taxon>Mycobacteriales</taxon>
        <taxon>Mycobacteriaceae</taxon>
        <taxon>Mycobacterium</taxon>
        <taxon>Mycobacterium tuberculosis complex</taxon>
    </lineage>
</organism>
<protein>
    <recommendedName>
        <fullName evidence="9">PPE family protein PPE41</fullName>
    </recommendedName>
</protein>
<dbReference type="EMBL" id="AL123456">
    <property type="protein sequence ID" value="CCP45222.1"/>
    <property type="molecule type" value="Genomic_DNA"/>
</dbReference>
<dbReference type="RefSeq" id="WP_003412549.1">
    <property type="nucleotide sequence ID" value="NZ_NVQJ01000024.1"/>
</dbReference>
<dbReference type="RefSeq" id="YP_177881.1">
    <property type="nucleotide sequence ID" value="NC_000962.3"/>
</dbReference>
<dbReference type="PDB" id="2G38">
    <property type="method" value="X-ray"/>
    <property type="resolution" value="2.20 A"/>
    <property type="chains" value="B/D=1-194"/>
</dbReference>
<dbReference type="PDB" id="4KXR">
    <property type="method" value="X-ray"/>
    <property type="resolution" value="2.60 A"/>
    <property type="chains" value="B=1-194"/>
</dbReference>
<dbReference type="PDB" id="4W4K">
    <property type="method" value="X-ray"/>
    <property type="resolution" value="1.95 A"/>
    <property type="chains" value="B/D=1-174"/>
</dbReference>
<dbReference type="PDB" id="4W4L">
    <property type="method" value="X-ray"/>
    <property type="resolution" value="2.45 A"/>
    <property type="chains" value="B=1-174"/>
</dbReference>
<dbReference type="PDB" id="6VJ5">
    <property type="method" value="X-ray"/>
    <property type="resolution" value="2.40 A"/>
    <property type="chains" value="B=1-194"/>
</dbReference>
<dbReference type="PDBsum" id="2G38"/>
<dbReference type="PDBsum" id="4KXR"/>
<dbReference type="PDBsum" id="4W4K"/>
<dbReference type="PDBsum" id="4W4L"/>
<dbReference type="PDBsum" id="6VJ5"/>
<dbReference type="SASBDB" id="Q79FE1"/>
<dbReference type="SMR" id="Q79FE1"/>
<dbReference type="DIP" id="DIP-42564N"/>
<dbReference type="FunCoup" id="Q79FE1">
    <property type="interactions" value="1"/>
</dbReference>
<dbReference type="IntAct" id="Q79FE1">
    <property type="interactions" value="2"/>
</dbReference>
<dbReference type="MINT" id="Q79FE1"/>
<dbReference type="STRING" id="83332.Rv2430c"/>
<dbReference type="PaxDb" id="83332-Rv2430c"/>
<dbReference type="DNASU" id="885945"/>
<dbReference type="GeneID" id="885945"/>
<dbReference type="KEGG" id="mtu:Rv2430c"/>
<dbReference type="KEGG" id="mtv:RVBD_2430c"/>
<dbReference type="PATRIC" id="fig|83332.111.peg.2717"/>
<dbReference type="TubercuList" id="Rv2430c"/>
<dbReference type="eggNOG" id="COG5651">
    <property type="taxonomic scope" value="Bacteria"/>
</dbReference>
<dbReference type="HOGENOM" id="CLU_000243_10_2_11"/>
<dbReference type="InParanoid" id="Q79FE1"/>
<dbReference type="OrthoDB" id="4753774at2"/>
<dbReference type="PhylomeDB" id="Q79FE1"/>
<dbReference type="EvolutionaryTrace" id="Q79FE1"/>
<dbReference type="Proteomes" id="UP000001584">
    <property type="component" value="Chromosome"/>
</dbReference>
<dbReference type="GO" id="GO:0009986">
    <property type="term" value="C:cell surface"/>
    <property type="evidence" value="ECO:0007669"/>
    <property type="project" value="UniProtKB-SubCell"/>
</dbReference>
<dbReference type="GO" id="GO:0005576">
    <property type="term" value="C:extracellular region"/>
    <property type="evidence" value="ECO:0007005"/>
    <property type="project" value="MTBBASE"/>
</dbReference>
<dbReference type="GO" id="GO:0052572">
    <property type="term" value="P:response to host immune response"/>
    <property type="evidence" value="ECO:0000318"/>
    <property type="project" value="GO_Central"/>
</dbReference>
<dbReference type="FunFam" id="1.20.1260.20:FF:000001">
    <property type="entry name" value="PPE family protein PPE41"/>
    <property type="match status" value="1"/>
</dbReference>
<dbReference type="Gene3D" id="1.20.1260.20">
    <property type="entry name" value="PPE superfamily"/>
    <property type="match status" value="1"/>
</dbReference>
<dbReference type="InterPro" id="IPR000030">
    <property type="entry name" value="PPE_dom"/>
</dbReference>
<dbReference type="InterPro" id="IPR038332">
    <property type="entry name" value="PPE_sf"/>
</dbReference>
<dbReference type="PANTHER" id="PTHR46766">
    <property type="entry name" value="GLUTAMINE-RICH PROTEIN 2"/>
    <property type="match status" value="1"/>
</dbReference>
<dbReference type="PANTHER" id="PTHR46766:SF1">
    <property type="entry name" value="GLUTAMINE-RICH PROTEIN 2"/>
    <property type="match status" value="1"/>
</dbReference>
<dbReference type="Pfam" id="PF00823">
    <property type="entry name" value="PPE"/>
    <property type="match status" value="1"/>
</dbReference>
<dbReference type="SUPFAM" id="SSF140459">
    <property type="entry name" value="PE/PPE dimer-like"/>
    <property type="match status" value="1"/>
</dbReference>
<feature type="chain" id="PRO_0000435111" description="PPE family protein PPE41">
    <location>
        <begin position="1"/>
        <end position="194"/>
    </location>
</feature>
<feature type="mutagenesis site" description="Does not disrupt the interaction with EspG5." evidence="5">
    <original>A</original>
    <variation>L</variation>
    <location>
        <position position="124"/>
    </location>
</feature>
<feature type="mutagenesis site" description="Does not affect formation of the PE25/PPE41 dimer, but abolishes EspG5 binding to PE25/PPE41." evidence="5">
    <original>L</original>
    <variation>E</variation>
    <variation>R</variation>
    <location>
        <position position="125"/>
    </location>
</feature>
<feature type="mutagenesis site" description="Does not disrupt the interaction with EspG5." evidence="5">
    <original>Q</original>
    <variation>I</variation>
    <location>
        <position position="127"/>
    </location>
</feature>
<feature type="mutagenesis site" description="Does not affect formation of the PE25/PPE41 dimer, but abolishes EspG5 binding to PE25/PPE41." evidence="5">
    <original>TA</original>
    <variation>DR</variation>
    <location>
        <begin position="129"/>
        <end position="130"/>
    </location>
</feature>
<feature type="mutagenesis site" description="Does not disrupt the interaction with EspG5." evidence="5">
    <original>A</original>
    <variation>I</variation>
    <location>
        <position position="130"/>
    </location>
</feature>
<feature type="helix" evidence="16">
    <location>
        <begin position="3"/>
        <end position="5"/>
    </location>
</feature>
<feature type="helix" evidence="15">
    <location>
        <begin position="8"/>
        <end position="17"/>
    </location>
</feature>
<feature type="helix" evidence="15">
    <location>
        <begin position="22"/>
        <end position="49"/>
    </location>
</feature>
<feature type="turn" evidence="15">
    <location>
        <begin position="50"/>
        <end position="55"/>
    </location>
</feature>
<feature type="helix" evidence="15">
    <location>
        <begin position="59"/>
        <end position="67"/>
    </location>
</feature>
<feature type="helix" evidence="15">
    <location>
        <begin position="69"/>
        <end position="102"/>
    </location>
</feature>
<feature type="helix" evidence="15">
    <location>
        <begin position="106"/>
        <end position="121"/>
    </location>
</feature>
<feature type="helix" evidence="15">
    <location>
        <begin position="129"/>
        <end position="162"/>
    </location>
</feature>
<name>PPE41_MYCTU</name>
<proteinExistence type="evidence at protein level"/>
<reference key="1">
    <citation type="journal article" date="1998" name="Nature">
        <title>Deciphering the biology of Mycobacterium tuberculosis from the complete genome sequence.</title>
        <authorList>
            <person name="Cole S.T."/>
            <person name="Brosch R."/>
            <person name="Parkhill J."/>
            <person name="Garnier T."/>
            <person name="Churcher C.M."/>
            <person name="Harris D.E."/>
            <person name="Gordon S.V."/>
            <person name="Eiglmeier K."/>
            <person name="Gas S."/>
            <person name="Barry C.E. III"/>
            <person name="Tekaia F."/>
            <person name="Badcock K."/>
            <person name="Basham D."/>
            <person name="Brown D."/>
            <person name="Chillingworth T."/>
            <person name="Connor R."/>
            <person name="Davies R.M."/>
            <person name="Devlin K."/>
            <person name="Feltwell T."/>
            <person name="Gentles S."/>
            <person name="Hamlin N."/>
            <person name="Holroyd S."/>
            <person name="Hornsby T."/>
            <person name="Jagels K."/>
            <person name="Krogh A."/>
            <person name="McLean J."/>
            <person name="Moule S."/>
            <person name="Murphy L.D."/>
            <person name="Oliver S."/>
            <person name="Osborne J."/>
            <person name="Quail M.A."/>
            <person name="Rajandream M.A."/>
            <person name="Rogers J."/>
            <person name="Rutter S."/>
            <person name="Seeger K."/>
            <person name="Skelton S."/>
            <person name="Squares S."/>
            <person name="Squares R."/>
            <person name="Sulston J.E."/>
            <person name="Taylor K."/>
            <person name="Whitehead S."/>
            <person name="Barrell B.G."/>
        </authorList>
    </citation>
    <scope>NUCLEOTIDE SEQUENCE [LARGE SCALE GENOMIC DNA]</scope>
    <source>
        <strain>ATCC 25618 / H37Rv</strain>
    </source>
</reference>
<reference key="2">
    <citation type="journal article" date="2006" name="Mol. Microbiol.">
        <title>A specific secretion system mediates PPE41 transport in pathogenic mycobacteria.</title>
        <authorList>
            <person name="Abdallah A.M."/>
            <person name="Verboom T."/>
            <person name="Hannes F."/>
            <person name="Safi M."/>
            <person name="Strong M."/>
            <person name="Eisenberg D."/>
            <person name="Musters R.J."/>
            <person name="Vandenbroucke-Grauls C.M."/>
            <person name="Appelmelk B.J."/>
            <person name="Luirink J."/>
            <person name="Bitter W."/>
        </authorList>
    </citation>
    <scope>SUBCELLULAR LOCATION</scope>
</reference>
<reference key="3">
    <citation type="journal article" date="2008" name="PLoS ONE">
        <title>The co-operonic PE25/PPE41 protein complex of Mycobacterium tuberculosis elicits increased humoral and cell mediated immune response.</title>
        <authorList>
            <person name="Tundup S."/>
            <person name="Pathak N."/>
            <person name="Ramanadham M."/>
            <person name="Mukhopadhyay S."/>
            <person name="Murthy K.J."/>
            <person name="Ehtesham N.Z."/>
            <person name="Hasnain S.E."/>
        </authorList>
    </citation>
    <scope>FUNCTION</scope>
</reference>
<reference key="4">
    <citation type="journal article" date="2011" name="Mol. Cell. Proteomics">
        <title>Proteogenomic analysis of Mycobacterium tuberculosis by high resolution mass spectrometry.</title>
        <authorList>
            <person name="Kelkar D.S."/>
            <person name="Kumar D."/>
            <person name="Kumar P."/>
            <person name="Balakrishnan L."/>
            <person name="Muthusamy B."/>
            <person name="Yadav A.K."/>
            <person name="Shrivastava P."/>
            <person name="Marimuthu A."/>
            <person name="Anand S."/>
            <person name="Sundaram H."/>
            <person name="Kingsbury R."/>
            <person name="Harsha H.C."/>
            <person name="Nair B."/>
            <person name="Prasad T.S."/>
            <person name="Chauhan D.S."/>
            <person name="Katoch K."/>
            <person name="Katoch V.M."/>
            <person name="Kumar P."/>
            <person name="Chaerkady R."/>
            <person name="Ramachandran S."/>
            <person name="Dash D."/>
            <person name="Pandey A."/>
        </authorList>
    </citation>
    <scope>IDENTIFICATION BY MASS SPECTROMETRY [LARGE SCALE ANALYSIS]</scope>
    <source>
        <strain>ATCC 25618 / H37Rv</strain>
    </source>
</reference>
<reference key="5">
    <citation type="journal article" date="2012" name="Mol. Microbiol.">
        <title>Disruption of the ESX-5 system of Mycobacterium tuberculosis causes loss of PPE protein secretion, reduction of cell wall integrity and strong attenuation.</title>
        <authorList>
            <person name="Bottai D."/>
            <person name="Di Luca M."/>
            <person name="Majlessi L."/>
            <person name="Frigui W."/>
            <person name="Simeone R."/>
            <person name="Sayes F."/>
            <person name="Bitter W."/>
            <person name="Brennan M.J."/>
            <person name="Leclerc C."/>
            <person name="Batoni G."/>
            <person name="Campa M."/>
            <person name="Brosch R."/>
            <person name="Esin S."/>
        </authorList>
    </citation>
    <scope>SUBCELLULAR LOCATION</scope>
    <source>
        <strain>H37Rv</strain>
    </source>
</reference>
<reference key="6">
    <citation type="journal article" date="2014" name="FEBS Open Bio">
        <title>Mycobacterium tuberculosis PE25/PPE41 protein complex induces necrosis in macrophages: Role in virulence and disease reactivation?</title>
        <authorList>
            <person name="Tundup S."/>
            <person name="Mohareer K."/>
            <person name="Hasnain S.E."/>
        </authorList>
    </citation>
    <scope>FUNCTION</scope>
</reference>
<reference key="7">
    <citation type="journal article" date="2016" name="Med. Microbiol. Immunol.">
        <title>Mycobacterium tuberculosis PE25/PPE41 protein complex induces activation and maturation of dendritic cells and drives Th2-biased immune responses.</title>
        <authorList>
            <person name="Chen W."/>
            <person name="Bao Y."/>
            <person name="Chen X."/>
            <person name="Burton J."/>
            <person name="Gong X."/>
            <person name="Gu D."/>
            <person name="Mi Y."/>
            <person name="Bao L."/>
        </authorList>
    </citation>
    <scope>FUNCTION</scope>
    <source>
        <strain>H37Rv</strain>
    </source>
</reference>
<reference evidence="11" key="8">
    <citation type="journal article" date="2006" name="Proc. Natl. Acad. Sci. U.S.A.">
        <title>Toward the structural genomics of complexes: crystal structure of a PE/PPE protein complex from Mycobacterium tuberculosis.</title>
        <authorList>
            <person name="Strong M."/>
            <person name="Sawaya M.R."/>
            <person name="Wang S."/>
            <person name="Phillips M."/>
            <person name="Cascio D."/>
            <person name="Eisenberg D."/>
        </authorList>
    </citation>
    <scope>X-RAY CRYSTALLOGRAPHY (2.20 ANGSTROMS) IN COMPLEX WITH PE25</scope>
    <scope>SUBUNIT</scope>
    <source>
        <strain>H37Rv</strain>
    </source>
</reference>
<reference evidence="12" key="9">
    <citation type="journal article" date="2014" name="Mol. Microbiol.">
        <title>Structure of the Mycobacterium tuberculosis type VII secretion system chaperone EspG5 in complex with PE25-PPE41 dimer.</title>
        <authorList>
            <person name="Korotkova N."/>
            <person name="Freire D."/>
            <person name="Phan T.H."/>
            <person name="Ummels R."/>
            <person name="Creekmore C.C."/>
            <person name="Evans T.J."/>
            <person name="Wilmanns M."/>
            <person name="Bitter W."/>
            <person name="Parret A.H."/>
            <person name="Houben E.N."/>
            <person name="Korotkov K.V."/>
        </authorList>
    </citation>
    <scope>X-RAY CRYSTALLOGRAPHY (2.60 ANGSTROMS) IN COMPLEX WITH PE25 AND ESPG5</scope>
    <scope>SUBUNIT</scope>
    <scope>MUTAGENESIS OF ALA-124; LEU-125; GLN-127; 129-THR-ALA-130 AND ALA-130</scope>
</reference>
<reference evidence="13 14" key="10">
    <citation type="journal article" date="2014" name="Proc. Natl. Acad. Sci. U.S.A.">
        <title>Structure of a PE-PPE-EspG complex from Mycobacterium tuberculosis reveals molecular specificity of ESX protein secretion.</title>
        <authorList>
            <person name="Ekiert D.C."/>
            <person name="Cox J.S."/>
        </authorList>
    </citation>
    <scope>X-RAY CRYSTALLOGRAPHY (2.85 ANGSTROMS) IN COMPLEX WITH PE25 AND IN COMPLEX WITH PE25 AND ESPG5</scope>
    <scope>SUBUNIT</scope>
    <source>
        <strain>ATCC 35801 / TMC 107 / Erdman</strain>
    </source>
</reference>
<evidence type="ECO:0000269" key="1">
    <source>
    </source>
</evidence>
<evidence type="ECO:0000269" key="2">
    <source>
    </source>
</evidence>
<evidence type="ECO:0000269" key="3">
    <source>
    </source>
</evidence>
<evidence type="ECO:0000269" key="4">
    <source>
    </source>
</evidence>
<evidence type="ECO:0000269" key="5">
    <source>
    </source>
</evidence>
<evidence type="ECO:0000269" key="6">
    <source>
    </source>
</evidence>
<evidence type="ECO:0000269" key="7">
    <source>
    </source>
</evidence>
<evidence type="ECO:0000269" key="8">
    <source>
    </source>
</evidence>
<evidence type="ECO:0000305" key="9"/>
<evidence type="ECO:0000312" key="10">
    <source>
        <dbReference type="EMBL" id="CCP45222.1"/>
    </source>
</evidence>
<evidence type="ECO:0007744" key="11">
    <source>
        <dbReference type="PDB" id="2G38"/>
    </source>
</evidence>
<evidence type="ECO:0007744" key="12">
    <source>
        <dbReference type="PDB" id="4KXR"/>
    </source>
</evidence>
<evidence type="ECO:0007744" key="13">
    <source>
        <dbReference type="PDB" id="4W4K"/>
    </source>
</evidence>
<evidence type="ECO:0007744" key="14">
    <source>
        <dbReference type="PDB" id="4W4L"/>
    </source>
</evidence>
<evidence type="ECO:0007829" key="15">
    <source>
        <dbReference type="PDB" id="2G38"/>
    </source>
</evidence>
<evidence type="ECO:0007829" key="16">
    <source>
        <dbReference type="PDB" id="6VJ5"/>
    </source>
</evidence>
<keyword id="KW-0002">3D-structure</keyword>
<keyword id="KW-1185">Reference proteome</keyword>
<keyword id="KW-0964">Secreted</keyword>
<keyword id="KW-0843">Virulence</keyword>
<accession>Q79FE1</accession>
<accession>F2GHN8</accession>
<accession>I6YDD9</accession>
<gene>
    <name evidence="10" type="primary">PPE41</name>
    <name evidence="10" type="ordered locus">Rv2430c</name>
</gene>
<comment type="function">
    <text evidence="3 7 8">The PE25/PPE41 dimer induces both a strong humoral and cellular immune response (PubMed:18974870). The dimer induces necrosis, but not apoptosis, in mouse macrophage cells (PubMed:25379378). It also induces activation and maturation of mouse dendritic cells and drives Th2-biased immune responses (PubMed:26318856).</text>
</comment>
<comment type="subunit">
    <text evidence="1 5 6">Forms a heterodimer with PE25. The dimer forms a 1:1:1 heterotrimeric complex with EspG5. PPE41 interacts directly with EspG5.</text>
</comment>
<comment type="interaction">
    <interactant intactId="EBI-8063017">
        <id>Q79FE1</id>
    </interactant>
    <interactant intactId="EBI-15582196">
        <id>I6X486</id>
        <label>PE25</label>
    </interactant>
    <organismsDiffer>false</organismsDiffer>
    <experiments>3</experiments>
</comment>
<comment type="interaction">
    <interactant intactId="EBI-8063017">
        <id>Q79FE1</id>
    </interactant>
    <interactant intactId="EBI-8063031">
        <id>Q7D756</id>
        <label>MT2506</label>
    </interactant>
    <organismsDiffer>true</organismsDiffer>
    <experiments>4</experiments>
</comment>
<comment type="subcellular location">
    <subcellularLocation>
        <location evidence="2 4">Secreted</location>
    </subcellularLocation>
    <subcellularLocation>
        <location evidence="2 4">Cell surface</location>
    </subcellularLocation>
    <text evidence="2 4">Secreted via the ESX-5 / type VII secretion system (T7SS).</text>
</comment>
<comment type="similarity">
    <text evidence="9">Belongs to the mycobacterial PPE family.</text>
</comment>
<sequence length="194" mass="21943">MHFEAYPPEVNSANIYAGPGPDSMLAAARAWRSLDVEMTAVQRSFNRTLLSLMDAWAGPVVMQLMEAAKPFVRWLTDLCVQLSEVERQIHEIVRAYEWAHHDMVPLAQIYNNRAERQILIDNNALGQFTAQIADLDQEYDDFWDEDGEVMRDYRLRVSDALSKLTPWKAPPPIAHSTVLVAPVSPSTASSRTDT</sequence>